<accession>B2AH98</accession>
<name>SYGA_CUPTR</name>
<dbReference type="EC" id="6.1.1.14" evidence="1"/>
<dbReference type="EMBL" id="CU633749">
    <property type="protein sequence ID" value="CAP63147.1"/>
    <property type="molecule type" value="Genomic_DNA"/>
</dbReference>
<dbReference type="RefSeq" id="WP_012351807.1">
    <property type="nucleotide sequence ID" value="NC_010528.1"/>
</dbReference>
<dbReference type="SMR" id="B2AH98"/>
<dbReference type="GeneID" id="29761092"/>
<dbReference type="KEGG" id="cti:RALTA_A0479"/>
<dbReference type="eggNOG" id="COG0752">
    <property type="taxonomic scope" value="Bacteria"/>
</dbReference>
<dbReference type="HOGENOM" id="CLU_057066_1_0_4"/>
<dbReference type="BioCyc" id="CTAI977880:RALTA_RS02345-MONOMER"/>
<dbReference type="Proteomes" id="UP000001692">
    <property type="component" value="Chromosome 1"/>
</dbReference>
<dbReference type="GO" id="GO:0005829">
    <property type="term" value="C:cytosol"/>
    <property type="evidence" value="ECO:0007669"/>
    <property type="project" value="TreeGrafter"/>
</dbReference>
<dbReference type="GO" id="GO:0005524">
    <property type="term" value="F:ATP binding"/>
    <property type="evidence" value="ECO:0007669"/>
    <property type="project" value="UniProtKB-UniRule"/>
</dbReference>
<dbReference type="GO" id="GO:0004820">
    <property type="term" value="F:glycine-tRNA ligase activity"/>
    <property type="evidence" value="ECO:0007669"/>
    <property type="project" value="UniProtKB-UniRule"/>
</dbReference>
<dbReference type="GO" id="GO:0006426">
    <property type="term" value="P:glycyl-tRNA aminoacylation"/>
    <property type="evidence" value="ECO:0007669"/>
    <property type="project" value="UniProtKB-UniRule"/>
</dbReference>
<dbReference type="CDD" id="cd00733">
    <property type="entry name" value="GlyRS_alpha_core"/>
    <property type="match status" value="1"/>
</dbReference>
<dbReference type="FunFam" id="3.30.930.10:FF:000006">
    <property type="entry name" value="Glycine--tRNA ligase alpha subunit"/>
    <property type="match status" value="1"/>
</dbReference>
<dbReference type="Gene3D" id="3.30.930.10">
    <property type="entry name" value="Bira Bifunctional Protein, Domain 2"/>
    <property type="match status" value="1"/>
</dbReference>
<dbReference type="Gene3D" id="1.20.58.180">
    <property type="entry name" value="Class II aaRS and biotin synthetases, domain 2"/>
    <property type="match status" value="1"/>
</dbReference>
<dbReference type="HAMAP" id="MF_00254">
    <property type="entry name" value="Gly_tRNA_synth_alpha"/>
    <property type="match status" value="1"/>
</dbReference>
<dbReference type="InterPro" id="IPR045864">
    <property type="entry name" value="aa-tRNA-synth_II/BPL/LPL"/>
</dbReference>
<dbReference type="InterPro" id="IPR006194">
    <property type="entry name" value="Gly-tRNA-synth_heterodimer"/>
</dbReference>
<dbReference type="InterPro" id="IPR002310">
    <property type="entry name" value="Gly-tRNA_ligase_asu"/>
</dbReference>
<dbReference type="NCBIfam" id="TIGR00388">
    <property type="entry name" value="glyQ"/>
    <property type="match status" value="1"/>
</dbReference>
<dbReference type="NCBIfam" id="NF006827">
    <property type="entry name" value="PRK09348.1"/>
    <property type="match status" value="1"/>
</dbReference>
<dbReference type="PANTHER" id="PTHR30075:SF2">
    <property type="entry name" value="GLYCINE--TRNA LIGASE, CHLOROPLASTIC_MITOCHONDRIAL 2"/>
    <property type="match status" value="1"/>
</dbReference>
<dbReference type="PANTHER" id="PTHR30075">
    <property type="entry name" value="GLYCYL-TRNA SYNTHETASE"/>
    <property type="match status" value="1"/>
</dbReference>
<dbReference type="Pfam" id="PF02091">
    <property type="entry name" value="tRNA-synt_2e"/>
    <property type="match status" value="1"/>
</dbReference>
<dbReference type="PRINTS" id="PR01044">
    <property type="entry name" value="TRNASYNTHGA"/>
</dbReference>
<dbReference type="SUPFAM" id="SSF55681">
    <property type="entry name" value="Class II aaRS and biotin synthetases"/>
    <property type="match status" value="1"/>
</dbReference>
<dbReference type="PROSITE" id="PS50861">
    <property type="entry name" value="AA_TRNA_LIGASE_II_GLYAB"/>
    <property type="match status" value="1"/>
</dbReference>
<comment type="catalytic activity">
    <reaction evidence="1">
        <text>tRNA(Gly) + glycine + ATP = glycyl-tRNA(Gly) + AMP + diphosphate</text>
        <dbReference type="Rhea" id="RHEA:16013"/>
        <dbReference type="Rhea" id="RHEA-COMP:9664"/>
        <dbReference type="Rhea" id="RHEA-COMP:9683"/>
        <dbReference type="ChEBI" id="CHEBI:30616"/>
        <dbReference type="ChEBI" id="CHEBI:33019"/>
        <dbReference type="ChEBI" id="CHEBI:57305"/>
        <dbReference type="ChEBI" id="CHEBI:78442"/>
        <dbReference type="ChEBI" id="CHEBI:78522"/>
        <dbReference type="ChEBI" id="CHEBI:456215"/>
        <dbReference type="EC" id="6.1.1.14"/>
    </reaction>
</comment>
<comment type="subunit">
    <text evidence="1">Tetramer of two alpha and two beta subunits.</text>
</comment>
<comment type="subcellular location">
    <subcellularLocation>
        <location evidence="1">Cytoplasm</location>
    </subcellularLocation>
</comment>
<comment type="similarity">
    <text evidence="1">Belongs to the class-II aminoacyl-tRNA synthetase family.</text>
</comment>
<gene>
    <name evidence="1" type="primary">glyQ</name>
    <name type="ordered locus">RALTA_A0479</name>
</gene>
<sequence>MLTFQQMILTLQAYWDRQGCALLQPIDLEVGAGTSHVHTFLRAIGPEPWRAAYVQPSRRPKDGRYGENPNRLQHYYQYQVVLKPAPENILVLYLGSLEALGLDLKQNDIRFVEDDWENPTLGAWGLGWEVWLNGMEVTQFTYFQQVGGIDCKPITGEITYGIERLAMYLQKVENVYDLVWTEWVENGETRRLTYGDVYHQNEVEQSTYNFEHSNTEILFRHFAEHEGEAKRLMGNGDGADAAAETGTRLALPAYEQVLKAAHTFNLLDARGAISVTERAAYIGRIRNLSRQVAQAYYDSREALGFPMCGQRDGARA</sequence>
<proteinExistence type="inferred from homology"/>
<protein>
    <recommendedName>
        <fullName evidence="1">Glycine--tRNA ligase alpha subunit</fullName>
        <ecNumber evidence="1">6.1.1.14</ecNumber>
    </recommendedName>
    <alternativeName>
        <fullName evidence="1">Glycyl-tRNA synthetase alpha subunit</fullName>
        <shortName evidence="1">GlyRS</shortName>
    </alternativeName>
</protein>
<organism>
    <name type="scientific">Cupriavidus taiwanensis (strain DSM 17343 / BCRC 17206 / CCUG 44338 / CIP 107171 / LMG 19424 / R1)</name>
    <name type="common">Ralstonia taiwanensis (strain LMG 19424)</name>
    <dbReference type="NCBI Taxonomy" id="977880"/>
    <lineage>
        <taxon>Bacteria</taxon>
        <taxon>Pseudomonadati</taxon>
        <taxon>Pseudomonadota</taxon>
        <taxon>Betaproteobacteria</taxon>
        <taxon>Burkholderiales</taxon>
        <taxon>Burkholderiaceae</taxon>
        <taxon>Cupriavidus</taxon>
    </lineage>
</organism>
<keyword id="KW-0030">Aminoacyl-tRNA synthetase</keyword>
<keyword id="KW-0067">ATP-binding</keyword>
<keyword id="KW-0963">Cytoplasm</keyword>
<keyword id="KW-0436">Ligase</keyword>
<keyword id="KW-0547">Nucleotide-binding</keyword>
<keyword id="KW-0648">Protein biosynthesis</keyword>
<evidence type="ECO:0000255" key="1">
    <source>
        <dbReference type="HAMAP-Rule" id="MF_00254"/>
    </source>
</evidence>
<reference key="1">
    <citation type="journal article" date="2008" name="Genome Res.">
        <title>Genome sequence of the beta-rhizobium Cupriavidus taiwanensis and comparative genomics of rhizobia.</title>
        <authorList>
            <person name="Amadou C."/>
            <person name="Pascal G."/>
            <person name="Mangenot S."/>
            <person name="Glew M."/>
            <person name="Bontemps C."/>
            <person name="Capela D."/>
            <person name="Carrere S."/>
            <person name="Cruveiller S."/>
            <person name="Dossat C."/>
            <person name="Lajus A."/>
            <person name="Marchetti M."/>
            <person name="Poinsot V."/>
            <person name="Rouy Z."/>
            <person name="Servin B."/>
            <person name="Saad M."/>
            <person name="Schenowitz C."/>
            <person name="Barbe V."/>
            <person name="Batut J."/>
            <person name="Medigue C."/>
            <person name="Masson-Boivin C."/>
        </authorList>
    </citation>
    <scope>NUCLEOTIDE SEQUENCE [LARGE SCALE GENOMIC DNA]</scope>
    <source>
        <strain>DSM 17343 / BCRC 17206 / CCUG 44338 / CIP 107171 / LMG 19424 / R1</strain>
    </source>
</reference>
<feature type="chain" id="PRO_1000101180" description="Glycine--tRNA ligase alpha subunit">
    <location>
        <begin position="1"/>
        <end position="316"/>
    </location>
</feature>